<evidence type="ECO:0000255" key="1">
    <source>
        <dbReference type="HAMAP-Rule" id="MF_00174"/>
    </source>
</evidence>
<gene>
    <name evidence="1" type="primary">epmA</name>
    <name type="synonym">yjeA</name>
    <name type="ordered locus">YPTB0414</name>
</gene>
<comment type="function">
    <text evidence="1">With EpmB is involved in the beta-lysylation step of the post-translational modification of translation elongation factor P (EF-P). Catalyzes the ATP-dependent activation of (R)-beta-lysine produced by EpmB, forming a lysyl-adenylate, from which the beta-lysyl moiety is then transferred to the epsilon-amino group of a conserved specific lysine residue in EF-P.</text>
</comment>
<comment type="catalytic activity">
    <reaction evidence="1">
        <text>D-beta-lysine + L-lysyl-[protein] + ATP = N(6)-((3R)-3,6-diaminohexanoyl)-L-lysyl-[protein] + AMP + diphosphate + H(+)</text>
        <dbReference type="Rhea" id="RHEA:83435"/>
        <dbReference type="Rhea" id="RHEA-COMP:9752"/>
        <dbReference type="Rhea" id="RHEA-COMP:20131"/>
        <dbReference type="ChEBI" id="CHEBI:15378"/>
        <dbReference type="ChEBI" id="CHEBI:29969"/>
        <dbReference type="ChEBI" id="CHEBI:30616"/>
        <dbReference type="ChEBI" id="CHEBI:33019"/>
        <dbReference type="ChEBI" id="CHEBI:84138"/>
        <dbReference type="ChEBI" id="CHEBI:156053"/>
        <dbReference type="ChEBI" id="CHEBI:456215"/>
    </reaction>
    <physiologicalReaction direction="left-to-right" evidence="1">
        <dbReference type="Rhea" id="RHEA:83436"/>
    </physiologicalReaction>
</comment>
<comment type="subunit">
    <text evidence="1">Homodimer.</text>
</comment>
<comment type="similarity">
    <text evidence="1">Belongs to the class-II aminoacyl-tRNA synthetase family. EpmA subfamily.</text>
</comment>
<organism>
    <name type="scientific">Yersinia pseudotuberculosis serotype I (strain IP32953)</name>
    <dbReference type="NCBI Taxonomy" id="273123"/>
    <lineage>
        <taxon>Bacteria</taxon>
        <taxon>Pseudomonadati</taxon>
        <taxon>Pseudomonadota</taxon>
        <taxon>Gammaproteobacteria</taxon>
        <taxon>Enterobacterales</taxon>
        <taxon>Yersiniaceae</taxon>
        <taxon>Yersinia</taxon>
    </lineage>
</organism>
<name>EPMA_YERPS</name>
<proteinExistence type="inferred from homology"/>
<dbReference type="EC" id="6.3.2.-" evidence="1"/>
<dbReference type="EMBL" id="BX936398">
    <property type="protein sequence ID" value="CAH19654.1"/>
    <property type="molecule type" value="Genomic_DNA"/>
</dbReference>
<dbReference type="RefSeq" id="WP_002209139.1">
    <property type="nucleotide sequence ID" value="NZ_CP009712.1"/>
</dbReference>
<dbReference type="SMR" id="Q66FC6"/>
<dbReference type="GeneID" id="57974246"/>
<dbReference type="KEGG" id="ypo:BZ17_2155"/>
<dbReference type="KEGG" id="yps:YPTB0414"/>
<dbReference type="PATRIC" id="fig|273123.14.peg.2279"/>
<dbReference type="Proteomes" id="UP000001011">
    <property type="component" value="Chromosome"/>
</dbReference>
<dbReference type="GO" id="GO:0005829">
    <property type="term" value="C:cytosol"/>
    <property type="evidence" value="ECO:0007669"/>
    <property type="project" value="TreeGrafter"/>
</dbReference>
<dbReference type="GO" id="GO:0016880">
    <property type="term" value="F:acid-ammonia (or amide) ligase activity"/>
    <property type="evidence" value="ECO:0007669"/>
    <property type="project" value="UniProtKB-UniRule"/>
</dbReference>
<dbReference type="GO" id="GO:0005524">
    <property type="term" value="F:ATP binding"/>
    <property type="evidence" value="ECO:0007669"/>
    <property type="project" value="UniProtKB-UniRule"/>
</dbReference>
<dbReference type="GO" id="GO:0004824">
    <property type="term" value="F:lysine-tRNA ligase activity"/>
    <property type="evidence" value="ECO:0007669"/>
    <property type="project" value="InterPro"/>
</dbReference>
<dbReference type="GO" id="GO:0000049">
    <property type="term" value="F:tRNA binding"/>
    <property type="evidence" value="ECO:0007669"/>
    <property type="project" value="TreeGrafter"/>
</dbReference>
<dbReference type="GO" id="GO:0006430">
    <property type="term" value="P:lysyl-tRNA aminoacylation"/>
    <property type="evidence" value="ECO:0007669"/>
    <property type="project" value="InterPro"/>
</dbReference>
<dbReference type="FunFam" id="3.30.930.10:FF:000017">
    <property type="entry name" value="Elongation factor P--(R)-beta-lysine ligase"/>
    <property type="match status" value="1"/>
</dbReference>
<dbReference type="Gene3D" id="3.30.930.10">
    <property type="entry name" value="Bira Bifunctional Protein, Domain 2"/>
    <property type="match status" value="1"/>
</dbReference>
<dbReference type="HAMAP" id="MF_00174">
    <property type="entry name" value="EF_P_modif_A"/>
    <property type="match status" value="1"/>
</dbReference>
<dbReference type="InterPro" id="IPR004364">
    <property type="entry name" value="Aa-tRNA-synt_II"/>
</dbReference>
<dbReference type="InterPro" id="IPR006195">
    <property type="entry name" value="aa-tRNA-synth_II"/>
</dbReference>
<dbReference type="InterPro" id="IPR045864">
    <property type="entry name" value="aa-tRNA-synth_II/BPL/LPL"/>
</dbReference>
<dbReference type="InterPro" id="IPR004525">
    <property type="entry name" value="EpmA"/>
</dbReference>
<dbReference type="InterPro" id="IPR018149">
    <property type="entry name" value="Lys-tRNA-synth_II_C"/>
</dbReference>
<dbReference type="NCBIfam" id="TIGR00462">
    <property type="entry name" value="genX"/>
    <property type="match status" value="1"/>
</dbReference>
<dbReference type="NCBIfam" id="NF006828">
    <property type="entry name" value="PRK09350.1"/>
    <property type="match status" value="1"/>
</dbReference>
<dbReference type="PANTHER" id="PTHR42918:SF6">
    <property type="entry name" value="ELONGATION FACTOR P--(R)-BETA-LYSINE LIGASE"/>
    <property type="match status" value="1"/>
</dbReference>
<dbReference type="PANTHER" id="PTHR42918">
    <property type="entry name" value="LYSYL-TRNA SYNTHETASE"/>
    <property type="match status" value="1"/>
</dbReference>
<dbReference type="Pfam" id="PF00152">
    <property type="entry name" value="tRNA-synt_2"/>
    <property type="match status" value="1"/>
</dbReference>
<dbReference type="PRINTS" id="PR00982">
    <property type="entry name" value="TRNASYNTHLYS"/>
</dbReference>
<dbReference type="SUPFAM" id="SSF55681">
    <property type="entry name" value="Class II aaRS and biotin synthetases"/>
    <property type="match status" value="1"/>
</dbReference>
<dbReference type="PROSITE" id="PS50862">
    <property type="entry name" value="AA_TRNA_LIGASE_II"/>
    <property type="match status" value="1"/>
</dbReference>
<accession>Q66FC6</accession>
<feature type="chain" id="PRO_1000023638" description="Elongation factor P--(R)-beta-lysine ligase">
    <location>
        <begin position="1"/>
        <end position="325"/>
    </location>
</feature>
<feature type="binding site" evidence="1">
    <location>
        <begin position="76"/>
        <end position="78"/>
    </location>
    <ligand>
        <name>substrate</name>
    </ligand>
</feature>
<feature type="binding site" evidence="1">
    <location>
        <begin position="100"/>
        <end position="102"/>
    </location>
    <ligand>
        <name>ATP</name>
        <dbReference type="ChEBI" id="CHEBI:30616"/>
    </ligand>
</feature>
<feature type="binding site" evidence="1">
    <location>
        <position position="109"/>
    </location>
    <ligand>
        <name>ATP</name>
        <dbReference type="ChEBI" id="CHEBI:30616"/>
    </ligand>
</feature>
<feature type="binding site" evidence="1">
    <location>
        <position position="118"/>
    </location>
    <ligand>
        <name>substrate</name>
    </ligand>
</feature>
<feature type="binding site" evidence="1">
    <location>
        <begin position="244"/>
        <end position="245"/>
    </location>
    <ligand>
        <name>ATP</name>
        <dbReference type="ChEBI" id="CHEBI:30616"/>
    </ligand>
</feature>
<feature type="binding site" evidence="1">
    <location>
        <position position="251"/>
    </location>
    <ligand>
        <name>substrate</name>
    </ligand>
</feature>
<feature type="binding site" evidence="1">
    <location>
        <position position="300"/>
    </location>
    <ligand>
        <name>ATP</name>
        <dbReference type="ChEBI" id="CHEBI:30616"/>
    </ligand>
</feature>
<protein>
    <recommendedName>
        <fullName evidence="1">Elongation factor P--(R)-beta-lysine ligase</fullName>
        <shortName evidence="1">EF-P--(R)-beta-lysine ligase</shortName>
        <ecNumber evidence="1">6.3.2.-</ecNumber>
    </recommendedName>
    <alternativeName>
        <fullName evidence="1">EF-P post-translational modification enzyme A</fullName>
    </alternativeName>
    <alternativeName>
        <fullName evidence="1">EF-P-lysine lysyltransferase</fullName>
    </alternativeName>
</protein>
<sequence length="325" mass="36700">MSDTASWQPSAPIANLLKRAAIMAEIRRFFADRGVLEVETPTMSQATVTDIHLVPFETRFVGPGAADGLTLYMMTSPEYHMKRLLAAGSGPIYQLGRSFRNEEAGRYHNPEFTMLEWYRPHYDMYRLMNEVDDLLQQILDCNSAETLSYQQAFLRHLNIDPLSAEKAQLREVAAKLDLSNIADTEEDRDTLLQLLFTVGVEPYIGRDKPAFIYHFPASQASLAEISTEDHRVAERFEVYFKGIELANGFRELTDGDEQLQRFEQDNRNRAKRGLPQNPIDMNLIAALKQGLPDCSGVALGVDRLVMLALNAERLSDVIAFPVNIA</sequence>
<keyword id="KW-0067">ATP-binding</keyword>
<keyword id="KW-0436">Ligase</keyword>
<keyword id="KW-0547">Nucleotide-binding</keyword>
<reference key="1">
    <citation type="journal article" date="2004" name="Proc. Natl. Acad. Sci. U.S.A.">
        <title>Insights into the evolution of Yersinia pestis through whole-genome comparison with Yersinia pseudotuberculosis.</title>
        <authorList>
            <person name="Chain P.S.G."/>
            <person name="Carniel E."/>
            <person name="Larimer F.W."/>
            <person name="Lamerdin J."/>
            <person name="Stoutland P.O."/>
            <person name="Regala W.M."/>
            <person name="Georgescu A.M."/>
            <person name="Vergez L.M."/>
            <person name="Land M.L."/>
            <person name="Motin V.L."/>
            <person name="Brubaker R.R."/>
            <person name="Fowler J."/>
            <person name="Hinnebusch J."/>
            <person name="Marceau M."/>
            <person name="Medigue C."/>
            <person name="Simonet M."/>
            <person name="Chenal-Francisque V."/>
            <person name="Souza B."/>
            <person name="Dacheux D."/>
            <person name="Elliott J.M."/>
            <person name="Derbise A."/>
            <person name="Hauser L.J."/>
            <person name="Garcia E."/>
        </authorList>
    </citation>
    <scope>NUCLEOTIDE SEQUENCE [LARGE SCALE GENOMIC DNA]</scope>
    <source>
        <strain>IP32953</strain>
    </source>
</reference>